<organism>
    <name type="scientific">Leptospira borgpetersenii serovar Hardjo-bovis (strain L550)</name>
    <dbReference type="NCBI Taxonomy" id="355276"/>
    <lineage>
        <taxon>Bacteria</taxon>
        <taxon>Pseudomonadati</taxon>
        <taxon>Spirochaetota</taxon>
        <taxon>Spirochaetia</taxon>
        <taxon>Leptospirales</taxon>
        <taxon>Leptospiraceae</taxon>
        <taxon>Leptospira</taxon>
    </lineage>
</organism>
<evidence type="ECO:0000255" key="1">
    <source>
        <dbReference type="HAMAP-Rule" id="MF_00379"/>
    </source>
</evidence>
<name>MNME_LEPBL</name>
<keyword id="KW-0963">Cytoplasm</keyword>
<keyword id="KW-0342">GTP-binding</keyword>
<keyword id="KW-0378">Hydrolase</keyword>
<keyword id="KW-0460">Magnesium</keyword>
<keyword id="KW-0479">Metal-binding</keyword>
<keyword id="KW-0547">Nucleotide-binding</keyword>
<keyword id="KW-0630">Potassium</keyword>
<keyword id="KW-0819">tRNA processing</keyword>
<gene>
    <name evidence="1" type="primary">mnmE</name>
    <name evidence="1" type="synonym">trmE</name>
    <name type="ordered locus">LBL_2934</name>
</gene>
<protein>
    <recommendedName>
        <fullName evidence="1">tRNA modification GTPase MnmE</fullName>
        <ecNumber evidence="1">3.6.-.-</ecNumber>
    </recommendedName>
</protein>
<comment type="function">
    <text evidence="1">Exhibits a very high intrinsic GTPase hydrolysis rate. Involved in the addition of a carboxymethylaminomethyl (cmnm) group at the wobble position (U34) of certain tRNAs, forming tRNA-cmnm(5)s(2)U34.</text>
</comment>
<comment type="cofactor">
    <cofactor evidence="1">
        <name>K(+)</name>
        <dbReference type="ChEBI" id="CHEBI:29103"/>
    </cofactor>
    <text evidence="1">Binds 1 potassium ion per subunit.</text>
</comment>
<comment type="subunit">
    <text evidence="1">Homodimer. Heterotetramer of two MnmE and two MnmG subunits.</text>
</comment>
<comment type="subcellular location">
    <subcellularLocation>
        <location evidence="1">Cytoplasm</location>
    </subcellularLocation>
</comment>
<comment type="similarity">
    <text evidence="1">Belongs to the TRAFAC class TrmE-Era-EngA-EngB-Septin-like GTPase superfamily. TrmE GTPase family.</text>
</comment>
<sequence>MNDTIAAVSTASGPGAIGIIRMSGPGALSISSSFLFSKNGFLSPSDIQPRIAIQCVFQIGDRKIDQILFFYFKTPNSYTGEDLCEFHFHGNPILLREALDAIFRAGARPAKQGEFSRRAFLNGKLDLTGVEAIGRLISARSRFELELAQKNVFGEVSRLTSNLRSQLISLKAECEAEIDFSTEDLTYESLEERKVRIEGVKTFCQTVIAKSNSAEKVIQQLRIVLYGEPNTGKSSLMNVLLGKDRSIISEIPGTTRDYISEEILLEGIPVRLVDTAGVRETEDHIERLGIERSEKEFQSADIRLFLIDVSKKEEWKKFIAKAKGRLEGSILVANKIDIRDSSWNPNLFSDVKDLIICEISCKTKEGIPILLDEIQKKAATMGHVEDYVLLEERQRYHFETIVRCLDKTLRLIEEGAPAEIYIQEMNYALSEIGEVNGRVDTEEVLGRIFSKFCIGK</sequence>
<feature type="chain" id="PRO_1000048838" description="tRNA modification GTPase MnmE">
    <location>
        <begin position="1"/>
        <end position="456"/>
    </location>
</feature>
<feature type="domain" description="TrmE-type G">
    <location>
        <begin position="220"/>
        <end position="379"/>
    </location>
</feature>
<feature type="binding site" evidence="1">
    <location>
        <position position="21"/>
    </location>
    <ligand>
        <name>(6S)-5-formyl-5,6,7,8-tetrahydrofolate</name>
        <dbReference type="ChEBI" id="CHEBI:57457"/>
    </ligand>
</feature>
<feature type="binding site" evidence="1">
    <location>
        <position position="85"/>
    </location>
    <ligand>
        <name>(6S)-5-formyl-5,6,7,8-tetrahydrofolate</name>
        <dbReference type="ChEBI" id="CHEBI:57457"/>
    </ligand>
</feature>
<feature type="binding site" evidence="1">
    <location>
        <position position="124"/>
    </location>
    <ligand>
        <name>(6S)-5-formyl-5,6,7,8-tetrahydrofolate</name>
        <dbReference type="ChEBI" id="CHEBI:57457"/>
    </ligand>
</feature>
<feature type="binding site" evidence="1">
    <location>
        <begin position="230"/>
        <end position="235"/>
    </location>
    <ligand>
        <name>GTP</name>
        <dbReference type="ChEBI" id="CHEBI:37565"/>
    </ligand>
</feature>
<feature type="binding site" evidence="1">
    <location>
        <position position="230"/>
    </location>
    <ligand>
        <name>K(+)</name>
        <dbReference type="ChEBI" id="CHEBI:29103"/>
    </ligand>
</feature>
<feature type="binding site" evidence="1">
    <location>
        <position position="234"/>
    </location>
    <ligand>
        <name>Mg(2+)</name>
        <dbReference type="ChEBI" id="CHEBI:18420"/>
    </ligand>
</feature>
<feature type="binding site" evidence="1">
    <location>
        <begin position="249"/>
        <end position="255"/>
    </location>
    <ligand>
        <name>GTP</name>
        <dbReference type="ChEBI" id="CHEBI:37565"/>
    </ligand>
</feature>
<feature type="binding site" evidence="1">
    <location>
        <position position="249"/>
    </location>
    <ligand>
        <name>K(+)</name>
        <dbReference type="ChEBI" id="CHEBI:29103"/>
    </ligand>
</feature>
<feature type="binding site" evidence="1">
    <location>
        <position position="251"/>
    </location>
    <ligand>
        <name>K(+)</name>
        <dbReference type="ChEBI" id="CHEBI:29103"/>
    </ligand>
</feature>
<feature type="binding site" evidence="1">
    <location>
        <position position="254"/>
    </location>
    <ligand>
        <name>K(+)</name>
        <dbReference type="ChEBI" id="CHEBI:29103"/>
    </ligand>
</feature>
<feature type="binding site" evidence="1">
    <location>
        <position position="255"/>
    </location>
    <ligand>
        <name>Mg(2+)</name>
        <dbReference type="ChEBI" id="CHEBI:18420"/>
    </ligand>
</feature>
<feature type="binding site" evidence="1">
    <location>
        <begin position="274"/>
        <end position="277"/>
    </location>
    <ligand>
        <name>GTP</name>
        <dbReference type="ChEBI" id="CHEBI:37565"/>
    </ligand>
</feature>
<feature type="binding site" evidence="1">
    <location>
        <position position="456"/>
    </location>
    <ligand>
        <name>(6S)-5-formyl-5,6,7,8-tetrahydrofolate</name>
        <dbReference type="ChEBI" id="CHEBI:57457"/>
    </ligand>
</feature>
<proteinExistence type="inferred from homology"/>
<reference key="1">
    <citation type="journal article" date="2006" name="Proc. Natl. Acad. Sci. U.S.A.">
        <title>Genome reduction in Leptospira borgpetersenii reflects limited transmission potential.</title>
        <authorList>
            <person name="Bulach D.M."/>
            <person name="Zuerner R.L."/>
            <person name="Wilson P."/>
            <person name="Seemann T."/>
            <person name="McGrath A."/>
            <person name="Cullen P.A."/>
            <person name="Davis J."/>
            <person name="Johnson M."/>
            <person name="Kuczek E."/>
            <person name="Alt D.P."/>
            <person name="Peterson-Burch B."/>
            <person name="Coppel R.L."/>
            <person name="Rood J.I."/>
            <person name="Davies J.K."/>
            <person name="Adler B."/>
        </authorList>
    </citation>
    <scope>NUCLEOTIDE SEQUENCE [LARGE SCALE GENOMIC DNA]</scope>
    <source>
        <strain>L550</strain>
    </source>
</reference>
<accession>Q04XE4</accession>
<dbReference type="EC" id="3.6.-.-" evidence="1"/>
<dbReference type="EMBL" id="CP000348">
    <property type="protein sequence ID" value="ABJ80251.1"/>
    <property type="molecule type" value="Genomic_DNA"/>
</dbReference>
<dbReference type="RefSeq" id="WP_011671158.1">
    <property type="nucleotide sequence ID" value="NC_008508.1"/>
</dbReference>
<dbReference type="SMR" id="Q04XE4"/>
<dbReference type="KEGG" id="lbl:LBL_2934"/>
<dbReference type="HOGENOM" id="CLU_019624_4_1_12"/>
<dbReference type="GO" id="GO:0005829">
    <property type="term" value="C:cytosol"/>
    <property type="evidence" value="ECO:0007669"/>
    <property type="project" value="TreeGrafter"/>
</dbReference>
<dbReference type="GO" id="GO:0005525">
    <property type="term" value="F:GTP binding"/>
    <property type="evidence" value="ECO:0007669"/>
    <property type="project" value="UniProtKB-UniRule"/>
</dbReference>
<dbReference type="GO" id="GO:0003924">
    <property type="term" value="F:GTPase activity"/>
    <property type="evidence" value="ECO:0007669"/>
    <property type="project" value="UniProtKB-UniRule"/>
</dbReference>
<dbReference type="GO" id="GO:0046872">
    <property type="term" value="F:metal ion binding"/>
    <property type="evidence" value="ECO:0007669"/>
    <property type="project" value="UniProtKB-KW"/>
</dbReference>
<dbReference type="GO" id="GO:0030488">
    <property type="term" value="P:tRNA methylation"/>
    <property type="evidence" value="ECO:0007669"/>
    <property type="project" value="TreeGrafter"/>
</dbReference>
<dbReference type="GO" id="GO:0002098">
    <property type="term" value="P:tRNA wobble uridine modification"/>
    <property type="evidence" value="ECO:0007669"/>
    <property type="project" value="TreeGrafter"/>
</dbReference>
<dbReference type="CDD" id="cd04164">
    <property type="entry name" value="trmE"/>
    <property type="match status" value="1"/>
</dbReference>
<dbReference type="CDD" id="cd14858">
    <property type="entry name" value="TrmE_N"/>
    <property type="match status" value="1"/>
</dbReference>
<dbReference type="FunFam" id="3.40.50.300:FF:001376">
    <property type="entry name" value="tRNA modification GTPase MnmE"/>
    <property type="match status" value="1"/>
</dbReference>
<dbReference type="Gene3D" id="3.40.50.300">
    <property type="entry name" value="P-loop containing nucleotide triphosphate hydrolases"/>
    <property type="match status" value="1"/>
</dbReference>
<dbReference type="Gene3D" id="3.30.1360.120">
    <property type="entry name" value="Probable tRNA modification gtpase trme, domain 1"/>
    <property type="match status" value="1"/>
</dbReference>
<dbReference type="Gene3D" id="1.20.120.430">
    <property type="entry name" value="tRNA modification GTPase MnmE domain 2"/>
    <property type="match status" value="1"/>
</dbReference>
<dbReference type="HAMAP" id="MF_00379">
    <property type="entry name" value="GTPase_MnmE"/>
    <property type="match status" value="1"/>
</dbReference>
<dbReference type="InterPro" id="IPR031168">
    <property type="entry name" value="G_TrmE"/>
</dbReference>
<dbReference type="InterPro" id="IPR006073">
    <property type="entry name" value="GTP-bd"/>
</dbReference>
<dbReference type="InterPro" id="IPR018948">
    <property type="entry name" value="GTP-bd_TrmE_N"/>
</dbReference>
<dbReference type="InterPro" id="IPR004520">
    <property type="entry name" value="GTPase_MnmE"/>
</dbReference>
<dbReference type="InterPro" id="IPR027368">
    <property type="entry name" value="MnmE_dom2"/>
</dbReference>
<dbReference type="InterPro" id="IPR025867">
    <property type="entry name" value="MnmE_helical"/>
</dbReference>
<dbReference type="InterPro" id="IPR027417">
    <property type="entry name" value="P-loop_NTPase"/>
</dbReference>
<dbReference type="InterPro" id="IPR005225">
    <property type="entry name" value="Small_GTP-bd"/>
</dbReference>
<dbReference type="InterPro" id="IPR027266">
    <property type="entry name" value="TrmE/GcvT_dom1"/>
</dbReference>
<dbReference type="NCBIfam" id="TIGR00450">
    <property type="entry name" value="mnmE_trmE_thdF"/>
    <property type="match status" value="1"/>
</dbReference>
<dbReference type="NCBIfam" id="TIGR00231">
    <property type="entry name" value="small_GTP"/>
    <property type="match status" value="1"/>
</dbReference>
<dbReference type="PANTHER" id="PTHR42714">
    <property type="entry name" value="TRNA MODIFICATION GTPASE GTPBP3"/>
    <property type="match status" value="1"/>
</dbReference>
<dbReference type="PANTHER" id="PTHR42714:SF2">
    <property type="entry name" value="TRNA MODIFICATION GTPASE GTPBP3, MITOCHONDRIAL"/>
    <property type="match status" value="1"/>
</dbReference>
<dbReference type="Pfam" id="PF01926">
    <property type="entry name" value="MMR_HSR1"/>
    <property type="match status" value="1"/>
</dbReference>
<dbReference type="Pfam" id="PF12631">
    <property type="entry name" value="MnmE_helical"/>
    <property type="match status" value="1"/>
</dbReference>
<dbReference type="Pfam" id="PF10396">
    <property type="entry name" value="TrmE_N"/>
    <property type="match status" value="1"/>
</dbReference>
<dbReference type="SUPFAM" id="SSF52540">
    <property type="entry name" value="P-loop containing nucleoside triphosphate hydrolases"/>
    <property type="match status" value="1"/>
</dbReference>
<dbReference type="PROSITE" id="PS51709">
    <property type="entry name" value="G_TRME"/>
    <property type="match status" value="1"/>
</dbReference>